<dbReference type="EMBL" id="AL713888">
    <property type="status" value="NOT_ANNOTATED_CDS"/>
    <property type="molecule type" value="Genomic_DNA"/>
</dbReference>
<dbReference type="FunCoup" id="A8MWL7">
    <property type="interactions" value="206"/>
</dbReference>
<dbReference type="IntAct" id="A8MWL7">
    <property type="interactions" value="1"/>
</dbReference>
<dbReference type="iPTMnet" id="A8MWL7"/>
<dbReference type="PhosphoSitePlus" id="A8MWL7"/>
<dbReference type="BioMuta" id="HGNC:15660"/>
<dbReference type="MassIVE" id="A8MWL7"/>
<dbReference type="PeptideAtlas" id="A8MWL7"/>
<dbReference type="TopDownProteomics" id="A8MWL7"/>
<dbReference type="AGR" id="HGNC:15660"/>
<dbReference type="GeneCards" id="TMEM14DP"/>
<dbReference type="HGNC" id="HGNC:15660">
    <property type="gene designation" value="TMEM14DP"/>
</dbReference>
<dbReference type="neXtProt" id="NX_A8MWL7"/>
<dbReference type="InParanoid" id="A8MWL7"/>
<dbReference type="PAN-GO" id="A8MWL7">
    <property type="GO annotations" value="2 GO annotations based on evolutionary models"/>
</dbReference>
<dbReference type="PhylomeDB" id="A8MWL7"/>
<dbReference type="PathwayCommons" id="A8MWL7"/>
<dbReference type="ChiTaRS" id="TMEM14DP">
    <property type="organism name" value="human"/>
</dbReference>
<dbReference type="Pharos" id="A8MWL7">
    <property type="development level" value="Tdark"/>
</dbReference>
<dbReference type="PRO" id="PR:A8MWL7"/>
<dbReference type="Proteomes" id="UP000005640">
    <property type="component" value="Unplaced"/>
</dbReference>
<dbReference type="RNAct" id="A8MWL7">
    <property type="molecule type" value="protein"/>
</dbReference>
<dbReference type="GO" id="GO:0031966">
    <property type="term" value="C:mitochondrial membrane"/>
    <property type="evidence" value="ECO:0000318"/>
    <property type="project" value="GO_Central"/>
</dbReference>
<dbReference type="GO" id="GO:0070453">
    <property type="term" value="P:regulation of heme biosynthetic process"/>
    <property type="evidence" value="ECO:0000318"/>
    <property type="project" value="GO_Central"/>
</dbReference>
<dbReference type="FunFam" id="1.10.10.1740:FF:000002">
    <property type="entry name" value="Transmembrane protein 14C"/>
    <property type="match status" value="1"/>
</dbReference>
<dbReference type="Gene3D" id="1.10.10.1740">
    <property type="entry name" value="Transmembrane protein 14-like"/>
    <property type="match status" value="1"/>
</dbReference>
<dbReference type="InterPro" id="IPR005349">
    <property type="entry name" value="TMEM14"/>
</dbReference>
<dbReference type="InterPro" id="IPR044890">
    <property type="entry name" value="TMEM14_sf"/>
</dbReference>
<dbReference type="PANTHER" id="PTHR12668">
    <property type="entry name" value="TRANSMEMBRANE PROTEIN 14, 15"/>
    <property type="match status" value="1"/>
</dbReference>
<dbReference type="PANTHER" id="PTHR12668:SF56">
    <property type="entry name" value="TRANSMEMBRANE PROTEIN 14DP"/>
    <property type="match status" value="1"/>
</dbReference>
<dbReference type="Pfam" id="PF03647">
    <property type="entry name" value="Tmemb_14"/>
    <property type="match status" value="1"/>
</dbReference>
<accession>A8MWL7</accession>
<comment type="subcellular location">
    <subcellularLocation>
        <location evidence="2">Membrane</location>
        <topology evidence="2">Multi-pass membrane protein</topology>
    </subcellularLocation>
</comment>
<comment type="similarity">
    <text evidence="2">Belongs to the TMEM14 family.</text>
</comment>
<comment type="caution">
    <text evidence="2">Could be the product of a pseudogene.</text>
</comment>
<protein>
    <recommendedName>
        <fullName>Transmembrane protein 14DP</fullName>
    </recommendedName>
</protein>
<name>TM14D_HUMAN</name>
<organism>
    <name type="scientific">Homo sapiens</name>
    <name type="common">Human</name>
    <dbReference type="NCBI Taxonomy" id="9606"/>
    <lineage>
        <taxon>Eukaryota</taxon>
        <taxon>Metazoa</taxon>
        <taxon>Chordata</taxon>
        <taxon>Craniata</taxon>
        <taxon>Vertebrata</taxon>
        <taxon>Euteleostomi</taxon>
        <taxon>Mammalia</taxon>
        <taxon>Eutheria</taxon>
        <taxon>Euarchontoglires</taxon>
        <taxon>Primates</taxon>
        <taxon>Haplorrhini</taxon>
        <taxon>Catarrhini</taxon>
        <taxon>Hominidae</taxon>
        <taxon>Homo</taxon>
    </lineage>
</organism>
<reference key="1">
    <citation type="journal article" date="2004" name="Nature">
        <title>The DNA sequence and comparative analysis of human chromosome 10.</title>
        <authorList>
            <person name="Deloukas P."/>
            <person name="Earthrowl M.E."/>
            <person name="Grafham D.V."/>
            <person name="Rubenfield M."/>
            <person name="French L."/>
            <person name="Steward C.A."/>
            <person name="Sims S.K."/>
            <person name="Jones M.C."/>
            <person name="Searle S."/>
            <person name="Scott C."/>
            <person name="Howe K."/>
            <person name="Hunt S.E."/>
            <person name="Andrews T.D."/>
            <person name="Gilbert J.G.R."/>
            <person name="Swarbreck D."/>
            <person name="Ashurst J.L."/>
            <person name="Taylor A."/>
            <person name="Battles J."/>
            <person name="Bird C.P."/>
            <person name="Ainscough R."/>
            <person name="Almeida J.P."/>
            <person name="Ashwell R.I.S."/>
            <person name="Ambrose K.D."/>
            <person name="Babbage A.K."/>
            <person name="Bagguley C.L."/>
            <person name="Bailey J."/>
            <person name="Banerjee R."/>
            <person name="Bates K."/>
            <person name="Beasley H."/>
            <person name="Bray-Allen S."/>
            <person name="Brown A.J."/>
            <person name="Brown J.Y."/>
            <person name="Burford D.C."/>
            <person name="Burrill W."/>
            <person name="Burton J."/>
            <person name="Cahill P."/>
            <person name="Camire D."/>
            <person name="Carter N.P."/>
            <person name="Chapman J.C."/>
            <person name="Clark S.Y."/>
            <person name="Clarke G."/>
            <person name="Clee C.M."/>
            <person name="Clegg S."/>
            <person name="Corby N."/>
            <person name="Coulson A."/>
            <person name="Dhami P."/>
            <person name="Dutta I."/>
            <person name="Dunn M."/>
            <person name="Faulkner L."/>
            <person name="Frankish A."/>
            <person name="Frankland J.A."/>
            <person name="Garner P."/>
            <person name="Garnett J."/>
            <person name="Gribble S."/>
            <person name="Griffiths C."/>
            <person name="Grocock R."/>
            <person name="Gustafson E."/>
            <person name="Hammond S."/>
            <person name="Harley J.L."/>
            <person name="Hart E."/>
            <person name="Heath P.D."/>
            <person name="Ho T.P."/>
            <person name="Hopkins B."/>
            <person name="Horne J."/>
            <person name="Howden P.J."/>
            <person name="Huckle E."/>
            <person name="Hynds C."/>
            <person name="Johnson C."/>
            <person name="Johnson D."/>
            <person name="Kana A."/>
            <person name="Kay M."/>
            <person name="Kimberley A.M."/>
            <person name="Kershaw J.K."/>
            <person name="Kokkinaki M."/>
            <person name="Laird G.K."/>
            <person name="Lawlor S."/>
            <person name="Lee H.M."/>
            <person name="Leongamornlert D.A."/>
            <person name="Laird G."/>
            <person name="Lloyd C."/>
            <person name="Lloyd D.M."/>
            <person name="Loveland J."/>
            <person name="Lovell J."/>
            <person name="McLaren S."/>
            <person name="McLay K.E."/>
            <person name="McMurray A."/>
            <person name="Mashreghi-Mohammadi M."/>
            <person name="Matthews L."/>
            <person name="Milne S."/>
            <person name="Nickerson T."/>
            <person name="Nguyen M."/>
            <person name="Overton-Larty E."/>
            <person name="Palmer S.A."/>
            <person name="Pearce A.V."/>
            <person name="Peck A.I."/>
            <person name="Pelan S."/>
            <person name="Phillimore B."/>
            <person name="Porter K."/>
            <person name="Rice C.M."/>
            <person name="Rogosin A."/>
            <person name="Ross M.T."/>
            <person name="Sarafidou T."/>
            <person name="Sehra H.K."/>
            <person name="Shownkeen R."/>
            <person name="Skuce C.D."/>
            <person name="Smith M."/>
            <person name="Standring L."/>
            <person name="Sycamore N."/>
            <person name="Tester J."/>
            <person name="Thorpe A."/>
            <person name="Torcasso W."/>
            <person name="Tracey A."/>
            <person name="Tromans A."/>
            <person name="Tsolas J."/>
            <person name="Wall M."/>
            <person name="Walsh J."/>
            <person name="Wang H."/>
            <person name="Weinstock K."/>
            <person name="West A.P."/>
            <person name="Willey D.L."/>
            <person name="Whitehead S.L."/>
            <person name="Wilming L."/>
            <person name="Wray P.W."/>
            <person name="Young L."/>
            <person name="Chen Y."/>
            <person name="Lovering R.C."/>
            <person name="Moschonas N.K."/>
            <person name="Siebert R."/>
            <person name="Fechtel K."/>
            <person name="Bentley D."/>
            <person name="Durbin R.M."/>
            <person name="Hubbard T."/>
            <person name="Doucette-Stamm L."/>
            <person name="Beck S."/>
            <person name="Smith D.R."/>
            <person name="Rogers J."/>
        </authorList>
    </citation>
    <scope>NUCLEOTIDE SEQUENCE [LARGE SCALE GENOMIC DNA]</scope>
</reference>
<evidence type="ECO:0000255" key="1"/>
<evidence type="ECO:0000305" key="2"/>
<sequence>MEKPLFPLVPLHWFGFGYTALVVSGGIVGYVKTGRAPSLAAGLLFGSLAGVGAYQLYQDPRNVWDFLAATSVTFVGIMGMRSYYYGKFMPVGLIAGASLLMAAKVGVRMLMTSD</sequence>
<proteinExistence type="uncertain"/>
<feature type="chain" id="PRO_0000344255" description="Transmembrane protein 14DP">
    <location>
        <begin position="1"/>
        <end position="114"/>
    </location>
</feature>
<feature type="transmembrane region" description="Helical" evidence="1">
    <location>
        <begin position="8"/>
        <end position="28"/>
    </location>
</feature>
<feature type="transmembrane region" description="Helical" evidence="1">
    <location>
        <begin position="36"/>
        <end position="56"/>
    </location>
</feature>
<feature type="transmembrane region" description="Helical" evidence="1">
    <location>
        <begin position="63"/>
        <end position="80"/>
    </location>
</feature>
<feature type="transmembrane region" description="Helical" evidence="1">
    <location>
        <begin position="83"/>
        <end position="103"/>
    </location>
</feature>
<feature type="sequence variant" id="VAR_045605" description="In dbSNP:rs5030881.">
    <original>R</original>
    <variation>C</variation>
    <location>
        <position position="108"/>
    </location>
</feature>
<gene>
    <name type="primary">TMEM14DP</name>
    <name type="synonym">TMEM14D</name>
</gene>
<keyword id="KW-0472">Membrane</keyword>
<keyword id="KW-1185">Reference proteome</keyword>
<keyword id="KW-0812">Transmembrane</keyword>
<keyword id="KW-1133">Transmembrane helix</keyword>